<comment type="subunit">
    <text evidence="3 4 6">Homodimer (Probable). Interacts with BTS and BHLH47/PYE (PubMed:20675571, PubMed:25452667).</text>
</comment>
<comment type="subcellular location">
    <subcellularLocation>
        <location evidence="1 4">Nucleus</location>
    </subcellularLocation>
</comment>
<comment type="alternative products">
    <event type="alternative splicing"/>
    <isoform>
        <id>Q8L467-1</id>
        <name>1</name>
        <sequence type="displayed"/>
    </isoform>
    <isoform>
        <id>Q8L467-2</id>
        <name>2</name>
        <sequence type="described" ref="VSP_036096"/>
    </isoform>
</comment>
<comment type="miscellaneous">
    <molecule>Isoform 2</molecule>
    <text evidence="6">May be due to a competing acceptor splice site.</text>
</comment>
<feature type="chain" id="PRO_0000358792" description="Transcription factor bHLH104">
    <location>
        <begin position="1"/>
        <end position="283"/>
    </location>
</feature>
<feature type="domain" description="bHLH" evidence="1">
    <location>
        <begin position="130"/>
        <end position="181"/>
    </location>
</feature>
<feature type="region of interest" description="Disordered" evidence="2">
    <location>
        <begin position="96"/>
        <end position="134"/>
    </location>
</feature>
<feature type="compositionally biased region" description="Basic and acidic residues" evidence="2">
    <location>
        <begin position="107"/>
        <end position="120"/>
    </location>
</feature>
<feature type="splice variant" id="VSP_036096" description="In isoform 2." evidence="5">
    <original>MYPSLDDDFVSDLFCFDQ</original>
    <variation>MDVNLFGHDDSC</variation>
    <location>
        <begin position="1"/>
        <end position="18"/>
    </location>
</feature>
<proteinExistence type="evidence at protein level"/>
<evidence type="ECO:0000255" key="1">
    <source>
        <dbReference type="PROSITE-ProRule" id="PRU00981"/>
    </source>
</evidence>
<evidence type="ECO:0000256" key="2">
    <source>
        <dbReference type="SAM" id="MobiDB-lite"/>
    </source>
</evidence>
<evidence type="ECO:0000269" key="3">
    <source>
    </source>
</evidence>
<evidence type="ECO:0000269" key="4">
    <source>
    </source>
</evidence>
<evidence type="ECO:0000303" key="5">
    <source>
    </source>
</evidence>
<evidence type="ECO:0000305" key="6"/>
<name>BH104_ARATH</name>
<sequence>MYPSLDDDFVSDLFCFDQSNGAELDDYTQFGVNLQTDQEDTFPDFVSYGVNLQQEPDEVFSIGASQLDLSSYNGVLSLEPEQVGQQDCEVVQEEEVEINSGSSGGAVKEEQEHLDDDCSRKRARTGSCSRGGGTKACRERLRREKLNERFMDLSSVLEPGRTPKTDKPAILDDAIRILNQLRDEALKLEETNQKLLEEIKSLKAEKNELREEKLVLKADKEKTEQQLKSMTAPSSGFIPHIPAAFNHNKMAVYPSYGYMPMWHYMPQSVRDTSRDQELRPPAA</sequence>
<keyword id="KW-0025">Alternative splicing</keyword>
<keyword id="KW-0238">DNA-binding</keyword>
<keyword id="KW-0539">Nucleus</keyword>
<keyword id="KW-1185">Reference proteome</keyword>
<keyword id="KW-0804">Transcription</keyword>
<keyword id="KW-0805">Transcription regulation</keyword>
<protein>
    <recommendedName>
        <fullName>Transcription factor bHLH104</fullName>
    </recommendedName>
    <alternativeName>
        <fullName>Basic helix-loop-helix protein 104</fullName>
        <shortName>AtbHLH104</shortName>
        <shortName>bHLH 104</shortName>
    </alternativeName>
    <alternativeName>
        <fullName>Transcription factor EN 136</fullName>
    </alternativeName>
    <alternativeName>
        <fullName>bHLH transcription factor bHLH104</fullName>
    </alternativeName>
</protein>
<accession>Q8L467</accession>
<accession>O23297</accession>
<dbReference type="EMBL" id="AF488628">
    <property type="protein sequence ID" value="AAM10963.1"/>
    <property type="molecule type" value="mRNA"/>
</dbReference>
<dbReference type="EMBL" id="Z97336">
    <property type="protein sequence ID" value="CAB10220.1"/>
    <property type="molecule type" value="Genomic_DNA"/>
</dbReference>
<dbReference type="EMBL" id="AL161538">
    <property type="protein sequence ID" value="CAB78483.1"/>
    <property type="molecule type" value="Genomic_DNA"/>
</dbReference>
<dbReference type="EMBL" id="CP002687">
    <property type="protein sequence ID" value="AEE83441.1"/>
    <property type="molecule type" value="Genomic_DNA"/>
</dbReference>
<dbReference type="EMBL" id="CP002687">
    <property type="protein sequence ID" value="AEE83442.1"/>
    <property type="molecule type" value="Genomic_DNA"/>
</dbReference>
<dbReference type="EMBL" id="CP002687">
    <property type="protein sequence ID" value="ANM66359.1"/>
    <property type="molecule type" value="Genomic_DNA"/>
</dbReference>
<dbReference type="EMBL" id="AY102106">
    <property type="protein sequence ID" value="AAM26676.1"/>
    <property type="molecule type" value="mRNA"/>
</dbReference>
<dbReference type="EMBL" id="AY133565">
    <property type="protein sequence ID" value="AAM91395.1"/>
    <property type="molecule type" value="mRNA"/>
</dbReference>
<dbReference type="EMBL" id="AY088053">
    <property type="protein sequence ID" value="AAM65599.1"/>
    <property type="molecule type" value="mRNA"/>
</dbReference>
<dbReference type="PIR" id="B71406">
    <property type="entry name" value="B71406"/>
</dbReference>
<dbReference type="RefSeq" id="NP_001328258.1">
    <molecule id="Q8L467-2"/>
    <property type="nucleotide sequence ID" value="NM_001340935.1"/>
</dbReference>
<dbReference type="RefSeq" id="NP_567431.1">
    <molecule id="Q8L467-1"/>
    <property type="nucleotide sequence ID" value="NM_117520.4"/>
</dbReference>
<dbReference type="RefSeq" id="NP_849383.1">
    <molecule id="Q8L467-2"/>
    <property type="nucleotide sequence ID" value="NM_179052.2"/>
</dbReference>
<dbReference type="SMR" id="Q8L467"/>
<dbReference type="BioGRID" id="12383">
    <property type="interactions" value="6"/>
</dbReference>
<dbReference type="FunCoup" id="Q8L467">
    <property type="interactions" value="869"/>
</dbReference>
<dbReference type="IntAct" id="Q8L467">
    <property type="interactions" value="4"/>
</dbReference>
<dbReference type="STRING" id="3702.Q8L467"/>
<dbReference type="iPTMnet" id="Q8L467"/>
<dbReference type="PaxDb" id="3702-AT4G14410.1"/>
<dbReference type="ProteomicsDB" id="240691">
    <molecule id="Q8L467-1"/>
</dbReference>
<dbReference type="EnsemblPlants" id="AT4G14410.1">
    <molecule id="Q8L467-1"/>
    <property type="protein sequence ID" value="AT4G14410.1"/>
    <property type="gene ID" value="AT4G14410"/>
</dbReference>
<dbReference type="EnsemblPlants" id="AT4G14410.2">
    <molecule id="Q8L467-2"/>
    <property type="protein sequence ID" value="AT4G14410.2"/>
    <property type="gene ID" value="AT4G14410"/>
</dbReference>
<dbReference type="EnsemblPlants" id="AT4G14410.3">
    <molecule id="Q8L467-2"/>
    <property type="protein sequence ID" value="AT4G14410.3"/>
    <property type="gene ID" value="AT4G14410"/>
</dbReference>
<dbReference type="GeneID" id="827086"/>
<dbReference type="Gramene" id="AT4G14410.1">
    <molecule id="Q8L467-1"/>
    <property type="protein sequence ID" value="AT4G14410.1"/>
    <property type="gene ID" value="AT4G14410"/>
</dbReference>
<dbReference type="Gramene" id="AT4G14410.2">
    <molecule id="Q8L467-2"/>
    <property type="protein sequence ID" value="AT4G14410.2"/>
    <property type="gene ID" value="AT4G14410"/>
</dbReference>
<dbReference type="Gramene" id="AT4G14410.3">
    <molecule id="Q8L467-2"/>
    <property type="protein sequence ID" value="AT4G14410.3"/>
    <property type="gene ID" value="AT4G14410"/>
</dbReference>
<dbReference type="KEGG" id="ath:AT4G14410"/>
<dbReference type="Araport" id="AT4G14410"/>
<dbReference type="TAIR" id="AT4G14410">
    <property type="gene designation" value="BHLH104"/>
</dbReference>
<dbReference type="eggNOG" id="ENOG502RXAH">
    <property type="taxonomic scope" value="Eukaryota"/>
</dbReference>
<dbReference type="HOGENOM" id="CLU_869720_0_0_1"/>
<dbReference type="InParanoid" id="Q8L467"/>
<dbReference type="OMA" id="QIPTPFN"/>
<dbReference type="PhylomeDB" id="Q8L467"/>
<dbReference type="PRO" id="PR:Q8L467"/>
<dbReference type="Proteomes" id="UP000006548">
    <property type="component" value="Chromosome 4"/>
</dbReference>
<dbReference type="ExpressionAtlas" id="Q8L467">
    <property type="expression patterns" value="baseline and differential"/>
</dbReference>
<dbReference type="GO" id="GO:0005634">
    <property type="term" value="C:nucleus"/>
    <property type="evidence" value="ECO:0000314"/>
    <property type="project" value="UniProtKB"/>
</dbReference>
<dbReference type="GO" id="GO:0003677">
    <property type="term" value="F:DNA binding"/>
    <property type="evidence" value="ECO:0007669"/>
    <property type="project" value="UniProtKB-KW"/>
</dbReference>
<dbReference type="GO" id="GO:0003700">
    <property type="term" value="F:DNA-binding transcription factor activity"/>
    <property type="evidence" value="ECO:0000250"/>
    <property type="project" value="TAIR"/>
</dbReference>
<dbReference type="GO" id="GO:0046983">
    <property type="term" value="F:protein dimerization activity"/>
    <property type="evidence" value="ECO:0007669"/>
    <property type="project" value="InterPro"/>
</dbReference>
<dbReference type="GO" id="GO:0071333">
    <property type="term" value="P:cellular response to glucose stimulus"/>
    <property type="evidence" value="ECO:0000316"/>
    <property type="project" value="TAIR"/>
</dbReference>
<dbReference type="GO" id="GO:0006879">
    <property type="term" value="P:intracellular iron ion homeostasis"/>
    <property type="evidence" value="ECO:0007669"/>
    <property type="project" value="InterPro"/>
</dbReference>
<dbReference type="GO" id="GO:0006355">
    <property type="term" value="P:regulation of DNA-templated transcription"/>
    <property type="evidence" value="ECO:0000304"/>
    <property type="project" value="TAIR"/>
</dbReference>
<dbReference type="CDD" id="cd11446">
    <property type="entry name" value="bHLH_AtILR3_like"/>
    <property type="match status" value="1"/>
</dbReference>
<dbReference type="FunFam" id="4.10.280.10:FF:000165">
    <property type="entry name" value="Transcription factor bHLH104"/>
    <property type="match status" value="1"/>
</dbReference>
<dbReference type="Gene3D" id="4.10.280.10">
    <property type="entry name" value="Helix-loop-helix DNA-binding domain"/>
    <property type="match status" value="1"/>
</dbReference>
<dbReference type="InterPro" id="IPR011598">
    <property type="entry name" value="bHLH_dom"/>
</dbReference>
<dbReference type="InterPro" id="IPR036638">
    <property type="entry name" value="HLH_DNA-bd_sf"/>
</dbReference>
<dbReference type="InterPro" id="IPR044818">
    <property type="entry name" value="ILR3-like"/>
</dbReference>
<dbReference type="PANTHER" id="PTHR46133">
    <property type="entry name" value="BHLH TRANSCRIPTION FACTOR"/>
    <property type="match status" value="1"/>
</dbReference>
<dbReference type="PANTHER" id="PTHR46133:SF9">
    <property type="entry name" value="TRANSCRIPTION FACTOR BHLH104"/>
    <property type="match status" value="1"/>
</dbReference>
<dbReference type="Pfam" id="PF00010">
    <property type="entry name" value="HLH"/>
    <property type="match status" value="1"/>
</dbReference>
<dbReference type="SMART" id="SM00353">
    <property type="entry name" value="HLH"/>
    <property type="match status" value="1"/>
</dbReference>
<dbReference type="SUPFAM" id="SSF47459">
    <property type="entry name" value="HLH, helix-loop-helix DNA-binding domain"/>
    <property type="match status" value="1"/>
</dbReference>
<dbReference type="PROSITE" id="PS50888">
    <property type="entry name" value="BHLH"/>
    <property type="match status" value="1"/>
</dbReference>
<reference key="1">
    <citation type="journal article" date="2003" name="Mol. Biol. Evol.">
        <title>The basic helix-loop-helix transcription factor family in plants: a genome-wide study of protein structure and functional diversity.</title>
        <authorList>
            <person name="Heim M.A."/>
            <person name="Jakoby M."/>
            <person name="Werber M."/>
            <person name="Martin C."/>
            <person name="Weisshaar B."/>
            <person name="Bailey P.C."/>
        </authorList>
    </citation>
    <scope>NUCLEOTIDE SEQUENCE [MRNA] (ISOFORM 2)</scope>
    <scope>GENE FAMILY</scope>
    <scope>NOMENCLATURE</scope>
    <source>
        <strain>cv. Columbia</strain>
    </source>
</reference>
<reference key="2">
    <citation type="journal article" date="1998" name="Nature">
        <title>Analysis of 1.9 Mb of contiguous sequence from chromosome 4 of Arabidopsis thaliana.</title>
        <authorList>
            <person name="Bevan M."/>
            <person name="Bancroft I."/>
            <person name="Bent E."/>
            <person name="Love K."/>
            <person name="Goodman H.M."/>
            <person name="Dean C."/>
            <person name="Bergkamp R."/>
            <person name="Dirkse W."/>
            <person name="van Staveren M."/>
            <person name="Stiekema W."/>
            <person name="Drost L."/>
            <person name="Ridley P."/>
            <person name="Hudson S.-A."/>
            <person name="Patel K."/>
            <person name="Murphy G."/>
            <person name="Piffanelli P."/>
            <person name="Wedler H."/>
            <person name="Wedler E."/>
            <person name="Wambutt R."/>
            <person name="Weitzenegger T."/>
            <person name="Pohl T."/>
            <person name="Terryn N."/>
            <person name="Gielen J."/>
            <person name="Villarroel R."/>
            <person name="De Clercq R."/>
            <person name="van Montagu M."/>
            <person name="Lecharny A."/>
            <person name="Aubourg S."/>
            <person name="Gy I."/>
            <person name="Kreis M."/>
            <person name="Lao N."/>
            <person name="Kavanagh T."/>
            <person name="Hempel S."/>
            <person name="Kotter P."/>
            <person name="Entian K.-D."/>
            <person name="Rieger M."/>
            <person name="Schaefer M."/>
            <person name="Funk B."/>
            <person name="Mueller-Auer S."/>
            <person name="Silvey M."/>
            <person name="James R."/>
            <person name="Monfort A."/>
            <person name="Pons A."/>
            <person name="Puigdomenech P."/>
            <person name="Douka A."/>
            <person name="Voukelatou E."/>
            <person name="Milioni D."/>
            <person name="Hatzopoulos P."/>
            <person name="Piravandi E."/>
            <person name="Obermaier B."/>
            <person name="Hilbert H."/>
            <person name="Duesterhoeft A."/>
            <person name="Moores T."/>
            <person name="Jones J.D.G."/>
            <person name="Eneva T."/>
            <person name="Palme K."/>
            <person name="Benes V."/>
            <person name="Rechmann S."/>
            <person name="Ansorge W."/>
            <person name="Cooke R."/>
            <person name="Berger C."/>
            <person name="Delseny M."/>
            <person name="Voet M."/>
            <person name="Volckaert G."/>
            <person name="Mewes H.-W."/>
            <person name="Klosterman S."/>
            <person name="Schueller C."/>
            <person name="Chalwatzis N."/>
        </authorList>
    </citation>
    <scope>NUCLEOTIDE SEQUENCE [LARGE SCALE GENOMIC DNA]</scope>
    <source>
        <strain>cv. Columbia</strain>
    </source>
</reference>
<reference key="3">
    <citation type="journal article" date="1999" name="Nature">
        <title>Sequence and analysis of chromosome 4 of the plant Arabidopsis thaliana.</title>
        <authorList>
            <person name="Mayer K.F.X."/>
            <person name="Schueller C."/>
            <person name="Wambutt R."/>
            <person name="Murphy G."/>
            <person name="Volckaert G."/>
            <person name="Pohl T."/>
            <person name="Duesterhoeft A."/>
            <person name="Stiekema W."/>
            <person name="Entian K.-D."/>
            <person name="Terryn N."/>
            <person name="Harris B."/>
            <person name="Ansorge W."/>
            <person name="Brandt P."/>
            <person name="Grivell L.A."/>
            <person name="Rieger M."/>
            <person name="Weichselgartner M."/>
            <person name="de Simone V."/>
            <person name="Obermaier B."/>
            <person name="Mache R."/>
            <person name="Mueller M."/>
            <person name="Kreis M."/>
            <person name="Delseny M."/>
            <person name="Puigdomenech P."/>
            <person name="Watson M."/>
            <person name="Schmidtheini T."/>
            <person name="Reichert B."/>
            <person name="Portetelle D."/>
            <person name="Perez-Alonso M."/>
            <person name="Boutry M."/>
            <person name="Bancroft I."/>
            <person name="Vos P."/>
            <person name="Hoheisel J."/>
            <person name="Zimmermann W."/>
            <person name="Wedler H."/>
            <person name="Ridley P."/>
            <person name="Langham S.-A."/>
            <person name="McCullagh B."/>
            <person name="Bilham L."/>
            <person name="Robben J."/>
            <person name="van der Schueren J."/>
            <person name="Grymonprez B."/>
            <person name="Chuang Y.-J."/>
            <person name="Vandenbussche F."/>
            <person name="Braeken M."/>
            <person name="Weltjens I."/>
            <person name="Voet M."/>
            <person name="Bastiaens I."/>
            <person name="Aert R."/>
            <person name="Defoor E."/>
            <person name="Weitzenegger T."/>
            <person name="Bothe G."/>
            <person name="Ramsperger U."/>
            <person name="Hilbert H."/>
            <person name="Braun M."/>
            <person name="Holzer E."/>
            <person name="Brandt A."/>
            <person name="Peters S."/>
            <person name="van Staveren M."/>
            <person name="Dirkse W."/>
            <person name="Mooijman P."/>
            <person name="Klein Lankhorst R."/>
            <person name="Rose M."/>
            <person name="Hauf J."/>
            <person name="Koetter P."/>
            <person name="Berneiser S."/>
            <person name="Hempel S."/>
            <person name="Feldpausch M."/>
            <person name="Lamberth S."/>
            <person name="Van den Daele H."/>
            <person name="De Keyser A."/>
            <person name="Buysshaert C."/>
            <person name="Gielen J."/>
            <person name="Villarroel R."/>
            <person name="De Clercq R."/>
            <person name="van Montagu M."/>
            <person name="Rogers J."/>
            <person name="Cronin A."/>
            <person name="Quail M.A."/>
            <person name="Bray-Allen S."/>
            <person name="Clark L."/>
            <person name="Doggett J."/>
            <person name="Hall S."/>
            <person name="Kay M."/>
            <person name="Lennard N."/>
            <person name="McLay K."/>
            <person name="Mayes R."/>
            <person name="Pettett A."/>
            <person name="Rajandream M.A."/>
            <person name="Lyne M."/>
            <person name="Benes V."/>
            <person name="Rechmann S."/>
            <person name="Borkova D."/>
            <person name="Bloecker H."/>
            <person name="Scharfe M."/>
            <person name="Grimm M."/>
            <person name="Loehnert T.-H."/>
            <person name="Dose S."/>
            <person name="de Haan M."/>
            <person name="Maarse A.C."/>
            <person name="Schaefer M."/>
            <person name="Mueller-Auer S."/>
            <person name="Gabel C."/>
            <person name="Fuchs M."/>
            <person name="Fartmann B."/>
            <person name="Granderath K."/>
            <person name="Dauner D."/>
            <person name="Herzl A."/>
            <person name="Neumann S."/>
            <person name="Argiriou A."/>
            <person name="Vitale D."/>
            <person name="Liguori R."/>
            <person name="Piravandi E."/>
            <person name="Massenet O."/>
            <person name="Quigley F."/>
            <person name="Clabauld G."/>
            <person name="Muendlein A."/>
            <person name="Felber R."/>
            <person name="Schnabl S."/>
            <person name="Hiller R."/>
            <person name="Schmidt W."/>
            <person name="Lecharny A."/>
            <person name="Aubourg S."/>
            <person name="Chefdor F."/>
            <person name="Cooke R."/>
            <person name="Berger C."/>
            <person name="Monfort A."/>
            <person name="Casacuberta E."/>
            <person name="Gibbons T."/>
            <person name="Weber N."/>
            <person name="Vandenbol M."/>
            <person name="Bargues M."/>
            <person name="Terol J."/>
            <person name="Torres A."/>
            <person name="Perez-Perez A."/>
            <person name="Purnelle B."/>
            <person name="Bent E."/>
            <person name="Johnson S."/>
            <person name="Tacon D."/>
            <person name="Jesse T."/>
            <person name="Heijnen L."/>
            <person name="Schwarz S."/>
            <person name="Scholler P."/>
            <person name="Heber S."/>
            <person name="Francs P."/>
            <person name="Bielke C."/>
            <person name="Frishman D."/>
            <person name="Haase D."/>
            <person name="Lemcke K."/>
            <person name="Mewes H.-W."/>
            <person name="Stocker S."/>
            <person name="Zaccaria P."/>
            <person name="Bevan M."/>
            <person name="Wilson R.K."/>
            <person name="de la Bastide M."/>
            <person name="Habermann K."/>
            <person name="Parnell L."/>
            <person name="Dedhia N."/>
            <person name="Gnoj L."/>
            <person name="Schutz K."/>
            <person name="Huang E."/>
            <person name="Spiegel L."/>
            <person name="Sekhon M."/>
            <person name="Murray J."/>
            <person name="Sheet P."/>
            <person name="Cordes M."/>
            <person name="Abu-Threideh J."/>
            <person name="Stoneking T."/>
            <person name="Kalicki J."/>
            <person name="Graves T."/>
            <person name="Harmon G."/>
            <person name="Edwards J."/>
            <person name="Latreille P."/>
            <person name="Courtney L."/>
            <person name="Cloud J."/>
            <person name="Abbott A."/>
            <person name="Scott K."/>
            <person name="Johnson D."/>
            <person name="Minx P."/>
            <person name="Bentley D."/>
            <person name="Fulton B."/>
            <person name="Miller N."/>
            <person name="Greco T."/>
            <person name="Kemp K."/>
            <person name="Kramer J."/>
            <person name="Fulton L."/>
            <person name="Mardis E."/>
            <person name="Dante M."/>
            <person name="Pepin K."/>
            <person name="Hillier L.W."/>
            <person name="Nelson J."/>
            <person name="Spieth J."/>
            <person name="Ryan E."/>
            <person name="Andrews S."/>
            <person name="Geisel C."/>
            <person name="Layman D."/>
            <person name="Du H."/>
            <person name="Ali J."/>
            <person name="Berghoff A."/>
            <person name="Jones K."/>
            <person name="Drone K."/>
            <person name="Cotton M."/>
            <person name="Joshu C."/>
            <person name="Antonoiu B."/>
            <person name="Zidanic M."/>
            <person name="Strong C."/>
            <person name="Sun H."/>
            <person name="Lamar B."/>
            <person name="Yordan C."/>
            <person name="Ma P."/>
            <person name="Zhong J."/>
            <person name="Preston R."/>
            <person name="Vil D."/>
            <person name="Shekher M."/>
            <person name="Matero A."/>
            <person name="Shah R."/>
            <person name="Swaby I.K."/>
            <person name="O'Shaughnessy A."/>
            <person name="Rodriguez M."/>
            <person name="Hoffman J."/>
            <person name="Till S."/>
            <person name="Granat S."/>
            <person name="Shohdy N."/>
            <person name="Hasegawa A."/>
            <person name="Hameed A."/>
            <person name="Lodhi M."/>
            <person name="Johnson A."/>
            <person name="Chen E."/>
            <person name="Marra M.A."/>
            <person name="Martienssen R."/>
            <person name="McCombie W.R."/>
        </authorList>
    </citation>
    <scope>NUCLEOTIDE SEQUENCE [LARGE SCALE GENOMIC DNA]</scope>
    <source>
        <strain>cv. Columbia</strain>
    </source>
</reference>
<reference key="4">
    <citation type="journal article" date="2017" name="Plant J.">
        <title>Araport11: a complete reannotation of the Arabidopsis thaliana reference genome.</title>
        <authorList>
            <person name="Cheng C.Y."/>
            <person name="Krishnakumar V."/>
            <person name="Chan A.P."/>
            <person name="Thibaud-Nissen F."/>
            <person name="Schobel S."/>
            <person name="Town C.D."/>
        </authorList>
    </citation>
    <scope>GENOME REANNOTATION</scope>
    <source>
        <strain>cv. Columbia</strain>
    </source>
</reference>
<reference key="5">
    <citation type="journal article" date="2003" name="Science">
        <title>Empirical analysis of transcriptional activity in the Arabidopsis genome.</title>
        <authorList>
            <person name="Yamada K."/>
            <person name="Lim J."/>
            <person name="Dale J.M."/>
            <person name="Chen H."/>
            <person name="Shinn P."/>
            <person name="Palm C.J."/>
            <person name="Southwick A.M."/>
            <person name="Wu H.C."/>
            <person name="Kim C.J."/>
            <person name="Nguyen M."/>
            <person name="Pham P.K."/>
            <person name="Cheuk R.F."/>
            <person name="Karlin-Newmann G."/>
            <person name="Liu S.X."/>
            <person name="Lam B."/>
            <person name="Sakano H."/>
            <person name="Wu T."/>
            <person name="Yu G."/>
            <person name="Miranda M."/>
            <person name="Quach H.L."/>
            <person name="Tripp M."/>
            <person name="Chang C.H."/>
            <person name="Lee J.M."/>
            <person name="Toriumi M.J."/>
            <person name="Chan M.M."/>
            <person name="Tang C.C."/>
            <person name="Onodera C.S."/>
            <person name="Deng J.M."/>
            <person name="Akiyama K."/>
            <person name="Ansari Y."/>
            <person name="Arakawa T."/>
            <person name="Banh J."/>
            <person name="Banno F."/>
            <person name="Bowser L."/>
            <person name="Brooks S.Y."/>
            <person name="Carninci P."/>
            <person name="Chao Q."/>
            <person name="Choy N."/>
            <person name="Enju A."/>
            <person name="Goldsmith A.D."/>
            <person name="Gurjal M."/>
            <person name="Hansen N.F."/>
            <person name="Hayashizaki Y."/>
            <person name="Johnson-Hopson C."/>
            <person name="Hsuan V.W."/>
            <person name="Iida K."/>
            <person name="Karnes M."/>
            <person name="Khan S."/>
            <person name="Koesema E."/>
            <person name="Ishida J."/>
            <person name="Jiang P.X."/>
            <person name="Jones T."/>
            <person name="Kawai J."/>
            <person name="Kamiya A."/>
            <person name="Meyers C."/>
            <person name="Nakajima M."/>
            <person name="Narusaka M."/>
            <person name="Seki M."/>
            <person name="Sakurai T."/>
            <person name="Satou M."/>
            <person name="Tamse R."/>
            <person name="Vaysberg M."/>
            <person name="Wallender E.K."/>
            <person name="Wong C."/>
            <person name="Yamamura Y."/>
            <person name="Yuan S."/>
            <person name="Shinozaki K."/>
            <person name="Davis R.W."/>
            <person name="Theologis A."/>
            <person name="Ecker J.R."/>
        </authorList>
    </citation>
    <scope>NUCLEOTIDE SEQUENCE [LARGE SCALE MRNA] (ISOFORM 1)</scope>
    <source>
        <strain>cv. Columbia</strain>
    </source>
</reference>
<reference key="6">
    <citation type="submission" date="2002-03" db="EMBL/GenBank/DDBJ databases">
        <title>Full-length cDNA from Arabidopsis thaliana.</title>
        <authorList>
            <person name="Brover V.V."/>
            <person name="Troukhan M.E."/>
            <person name="Alexandrov N.A."/>
            <person name="Lu Y.-P."/>
            <person name="Flavell R.B."/>
            <person name="Feldmann K.A."/>
        </authorList>
    </citation>
    <scope>NUCLEOTIDE SEQUENCE [LARGE SCALE MRNA] (ISOFORM 1)</scope>
</reference>
<reference key="7">
    <citation type="journal article" date="2003" name="Plant Cell">
        <title>The Arabidopsis basic/helix-loop-helix transcription factor family.</title>
        <authorList>
            <person name="Toledo-Ortiz G."/>
            <person name="Huq E."/>
            <person name="Quail P.H."/>
        </authorList>
    </citation>
    <scope>GENE FAMILY</scope>
</reference>
<reference key="8">
    <citation type="journal article" date="2003" name="Plant Cell">
        <title>Update on the basic helix-loop-helix transcription factor gene family in Arabidopsis thaliana.</title>
        <authorList>
            <person name="Bailey P.C."/>
            <person name="Martin C."/>
            <person name="Toledo-Ortiz G."/>
            <person name="Quail P.H."/>
            <person name="Huq E."/>
            <person name="Heim M.A."/>
            <person name="Jakoby M."/>
            <person name="Werber M."/>
            <person name="Weisshaar B."/>
        </authorList>
    </citation>
    <scope>GENE FAMILY</scope>
    <scope>NOMENCLATURE</scope>
</reference>
<reference key="9">
    <citation type="journal article" date="2010" name="Plant Cell">
        <title>The bHLH transcription factor POPEYE regulates response to iron deficiency in Arabidopsis roots.</title>
        <authorList>
            <person name="Long T.A."/>
            <person name="Tsukagoshi H."/>
            <person name="Busch W."/>
            <person name="Lahner B."/>
            <person name="Salt D.E."/>
            <person name="Benfey P.N."/>
        </authorList>
    </citation>
    <scope>INTERACTION WITH BTS</scope>
    <source>
        <strain>cv. Columbia</strain>
    </source>
</reference>
<reference key="10">
    <citation type="journal article" date="2015" name="Plant Physiol.">
        <title>Iron-binding E3 ligase mediates iron response in plants by targeting basic helix-loop-helix transcription factors.</title>
        <authorList>
            <person name="Selote D."/>
            <person name="Samira R."/>
            <person name="Matthiadis A."/>
            <person name="Gillikin J.W."/>
            <person name="Long T.A."/>
        </authorList>
    </citation>
    <scope>INTERACTION WITH BTS AND BHLH47/PYE</scope>
    <scope>SUBCELLULAR LOCATION</scope>
    <source>
        <strain>cv. Columbia</strain>
    </source>
</reference>
<gene>
    <name type="primary">BHLH104</name>
    <name type="synonym">EN136</name>
    <name type="ordered locus">At4g14410</name>
    <name type="ORF">dl3245w</name>
    <name type="ORF">FCAALL.201</name>
</gene>
<organism>
    <name type="scientific">Arabidopsis thaliana</name>
    <name type="common">Mouse-ear cress</name>
    <dbReference type="NCBI Taxonomy" id="3702"/>
    <lineage>
        <taxon>Eukaryota</taxon>
        <taxon>Viridiplantae</taxon>
        <taxon>Streptophyta</taxon>
        <taxon>Embryophyta</taxon>
        <taxon>Tracheophyta</taxon>
        <taxon>Spermatophyta</taxon>
        <taxon>Magnoliopsida</taxon>
        <taxon>eudicotyledons</taxon>
        <taxon>Gunneridae</taxon>
        <taxon>Pentapetalae</taxon>
        <taxon>rosids</taxon>
        <taxon>malvids</taxon>
        <taxon>Brassicales</taxon>
        <taxon>Brassicaceae</taxon>
        <taxon>Camelineae</taxon>
        <taxon>Arabidopsis</taxon>
    </lineage>
</organism>